<keyword id="KW-0002">3D-structure</keyword>
<keyword id="KW-0963">Cytoplasm</keyword>
<keyword id="KW-0238">DNA-binding</keyword>
<keyword id="KW-1185">Reference proteome</keyword>
<keyword id="KW-0731">Sigma factor</keyword>
<keyword id="KW-0804">Transcription</keyword>
<keyword id="KW-0805">Transcription regulation</keyword>
<comment type="function">
    <text evidence="1">Sigma factors are initiation factors that promote the attachment of RNA polymerase to specific initiation sites and are then released. This sigma factor is the master transcriptional regulator of the stationary phase and the general stress response.</text>
</comment>
<comment type="subunit">
    <text evidence="1">Interacts with the RNA polymerase core enzyme.</text>
</comment>
<comment type="subcellular location">
    <subcellularLocation>
        <location evidence="1">Cytoplasm</location>
    </subcellularLocation>
</comment>
<comment type="similarity">
    <text evidence="1">Belongs to the sigma-70 factor family. RpoS subfamily.</text>
</comment>
<name>RPOS_PSEAE</name>
<feature type="chain" id="PRO_0000093975" description="RNA polymerase sigma factor RpoS">
    <location>
        <begin position="1"/>
        <end position="334"/>
    </location>
</feature>
<feature type="DNA-binding region" description="H-T-H motif" evidence="1">
    <location>
        <begin position="293"/>
        <end position="312"/>
    </location>
</feature>
<feature type="region of interest" description="Disordered" evidence="2">
    <location>
        <begin position="21"/>
        <end position="50"/>
    </location>
</feature>
<feature type="region of interest" description="Sigma-70 factor domain-1" evidence="1">
    <location>
        <begin position="61"/>
        <end position="94"/>
    </location>
</feature>
<feature type="region of interest" description="Sigma-70 factor domain-2" evidence="1">
    <location>
        <begin position="99"/>
        <end position="169"/>
    </location>
</feature>
<feature type="region of interest" description="Sigma-70 factor domain-3" evidence="1">
    <location>
        <begin position="179"/>
        <end position="254"/>
    </location>
</feature>
<feature type="region of interest" description="Sigma-70 factor domain-4" evidence="1">
    <location>
        <begin position="267"/>
        <end position="320"/>
    </location>
</feature>
<feature type="short sequence motif" description="Interaction with polymerase core subunit RpoC">
    <location>
        <begin position="123"/>
        <end position="126"/>
    </location>
</feature>
<feature type="helix" evidence="3">
    <location>
        <begin position="64"/>
        <end position="70"/>
    </location>
</feature>
<feature type="turn" evidence="3">
    <location>
        <begin position="78"/>
        <end position="80"/>
    </location>
</feature>
<feature type="helix" evidence="3">
    <location>
        <begin position="81"/>
        <end position="90"/>
    </location>
</feature>
<feature type="turn" evidence="3">
    <location>
        <begin position="93"/>
        <end position="95"/>
    </location>
</feature>
<feature type="helix" evidence="3">
    <location>
        <begin position="96"/>
        <end position="102"/>
    </location>
</feature>
<feature type="turn" evidence="3">
    <location>
        <begin position="103"/>
        <end position="106"/>
    </location>
</feature>
<feature type="helix" evidence="3">
    <location>
        <begin position="107"/>
        <end position="111"/>
    </location>
</feature>
<feature type="strand" evidence="3">
    <location>
        <begin position="117"/>
        <end position="119"/>
    </location>
</feature>
<feature type="helix" evidence="3">
    <location>
        <begin position="121"/>
        <end position="137"/>
    </location>
</feature>
<feature type="helix" evidence="3">
    <location>
        <begin position="148"/>
        <end position="163"/>
    </location>
</feature>
<feature type="strand" evidence="3">
    <location>
        <begin position="166"/>
        <end position="170"/>
    </location>
</feature>
<feature type="turn" evidence="3">
    <location>
        <begin position="174"/>
        <end position="176"/>
    </location>
</feature>
<feature type="helix" evidence="3">
    <location>
        <begin position="177"/>
        <end position="191"/>
    </location>
</feature>
<feature type="turn" evidence="3">
    <location>
        <begin position="192"/>
        <end position="195"/>
    </location>
</feature>
<feature type="helix" evidence="3">
    <location>
        <begin position="203"/>
        <end position="206"/>
    </location>
</feature>
<feature type="helix" evidence="3">
    <location>
        <begin position="211"/>
        <end position="219"/>
    </location>
</feature>
<feature type="strand" evidence="3">
    <location>
        <begin position="225"/>
        <end position="230"/>
    </location>
</feature>
<feature type="strand" evidence="3">
    <location>
        <begin position="232"/>
        <end position="234"/>
    </location>
</feature>
<feature type="helix" evidence="3">
    <location>
        <begin position="240"/>
        <end position="242"/>
    </location>
</feature>
<feature type="strand" evidence="3">
    <location>
        <begin position="246"/>
        <end position="248"/>
    </location>
</feature>
<feature type="helix" evidence="3">
    <location>
        <begin position="251"/>
        <end position="267"/>
    </location>
</feature>
<feature type="helix" evidence="3">
    <location>
        <begin position="275"/>
        <end position="282"/>
    </location>
</feature>
<feature type="helix" evidence="3">
    <location>
        <begin position="293"/>
        <end position="296"/>
    </location>
</feature>
<feature type="turn" evidence="3">
    <location>
        <begin position="297"/>
        <end position="300"/>
    </location>
</feature>
<feature type="helix" evidence="3">
    <location>
        <begin position="306"/>
        <end position="323"/>
    </location>
</feature>
<feature type="turn" evidence="3">
    <location>
        <begin position="324"/>
        <end position="326"/>
    </location>
</feature>
<feature type="helix" evidence="3">
    <location>
        <begin position="329"/>
        <end position="332"/>
    </location>
</feature>
<gene>
    <name evidence="1" type="primary">rpoS</name>
    <name type="ordered locus">PA3622</name>
</gene>
<accession>P45684</accession>
<evidence type="ECO:0000255" key="1">
    <source>
        <dbReference type="HAMAP-Rule" id="MF_00959"/>
    </source>
</evidence>
<evidence type="ECO:0000256" key="2">
    <source>
        <dbReference type="SAM" id="MobiDB-lite"/>
    </source>
</evidence>
<evidence type="ECO:0007829" key="3">
    <source>
        <dbReference type="PDB" id="7XL3"/>
    </source>
</evidence>
<protein>
    <recommendedName>
        <fullName evidence="1">RNA polymerase sigma factor RpoS</fullName>
    </recommendedName>
    <alternativeName>
        <fullName evidence="1">Sigma S</fullName>
    </alternativeName>
    <alternativeName>
        <fullName evidence="1">Sigma-38</fullName>
    </alternativeName>
</protein>
<reference key="1">
    <citation type="journal article" date="1994" name="Gene">
        <title>Cloning, analysis and expression of an rpoS homologue gene from Pseudomonas aeruginosa PAO1.</title>
        <authorList>
            <person name="Tanaka K."/>
            <person name="Takahashi H."/>
        </authorList>
    </citation>
    <scope>NUCLEOTIDE SEQUENCE [GENOMIC DNA]</scope>
    <source>
        <strain>ATCC 15692 / DSM 22644 / CIP 104116 / JCM 14847 / LMG 12228 / 1C / PRS 101 / PAO1</strain>
    </source>
</reference>
<reference key="2">
    <citation type="journal article" date="2000" name="Nature">
        <title>Complete genome sequence of Pseudomonas aeruginosa PAO1, an opportunistic pathogen.</title>
        <authorList>
            <person name="Stover C.K."/>
            <person name="Pham X.-Q.T."/>
            <person name="Erwin A.L."/>
            <person name="Mizoguchi S.D."/>
            <person name="Warrener P."/>
            <person name="Hickey M.J."/>
            <person name="Brinkman F.S.L."/>
            <person name="Hufnagle W.O."/>
            <person name="Kowalik D.J."/>
            <person name="Lagrou M."/>
            <person name="Garber R.L."/>
            <person name="Goltry L."/>
            <person name="Tolentino E."/>
            <person name="Westbrock-Wadman S."/>
            <person name="Yuan Y."/>
            <person name="Brody L.L."/>
            <person name="Coulter S.N."/>
            <person name="Folger K.R."/>
            <person name="Kas A."/>
            <person name="Larbig K."/>
            <person name="Lim R.M."/>
            <person name="Smith K.A."/>
            <person name="Spencer D.H."/>
            <person name="Wong G.K.-S."/>
            <person name="Wu Z."/>
            <person name="Paulsen I.T."/>
            <person name="Reizer J."/>
            <person name="Saier M.H. Jr."/>
            <person name="Hancock R.E.W."/>
            <person name="Lory S."/>
            <person name="Olson M.V."/>
        </authorList>
    </citation>
    <scope>NUCLEOTIDE SEQUENCE [LARGE SCALE GENOMIC DNA]</scope>
    <source>
        <strain>ATCC 15692 / DSM 22644 / CIP 104116 / JCM 14847 / LMG 12228 / 1C / PRS 101 / PAO1</strain>
    </source>
</reference>
<dbReference type="EMBL" id="D26134">
    <property type="protein sequence ID" value="BAA05131.1"/>
    <property type="molecule type" value="Genomic_DNA"/>
</dbReference>
<dbReference type="EMBL" id="AE004091">
    <property type="protein sequence ID" value="AAG07010.1"/>
    <property type="molecule type" value="Genomic_DNA"/>
</dbReference>
<dbReference type="PIR" id="S55064">
    <property type="entry name" value="S55064"/>
</dbReference>
<dbReference type="RefSeq" id="NP_252312.1">
    <property type="nucleotide sequence ID" value="NC_002516.2"/>
</dbReference>
<dbReference type="RefSeq" id="WP_003113871.1">
    <property type="nucleotide sequence ID" value="NZ_QZGE01000001.1"/>
</dbReference>
<dbReference type="PDB" id="7F0R">
    <property type="method" value="EM"/>
    <property type="resolution" value="5.80 A"/>
    <property type="chains" value="F=1-334"/>
</dbReference>
<dbReference type="PDB" id="7VF9">
    <property type="method" value="EM"/>
    <property type="resolution" value="4.04 A"/>
    <property type="chains" value="F=1-334"/>
</dbReference>
<dbReference type="PDB" id="7XL3">
    <property type="method" value="EM"/>
    <property type="resolution" value="3.13 A"/>
    <property type="chains" value="F=1-334"/>
</dbReference>
<dbReference type="PDB" id="7XL4">
    <property type="method" value="EM"/>
    <property type="resolution" value="3.86 A"/>
    <property type="chains" value="F=1-334"/>
</dbReference>
<dbReference type="PDBsum" id="7F0R"/>
<dbReference type="PDBsum" id="7VF9"/>
<dbReference type="PDBsum" id="7XL3"/>
<dbReference type="PDBsum" id="7XL4"/>
<dbReference type="EMDB" id="EMD-31403"/>
<dbReference type="EMDB" id="EMD-31948"/>
<dbReference type="EMDB" id="EMD-33271"/>
<dbReference type="EMDB" id="EMD-33272"/>
<dbReference type="SMR" id="P45684"/>
<dbReference type="FunCoup" id="P45684">
    <property type="interactions" value="299"/>
</dbReference>
<dbReference type="STRING" id="208964.PA3622"/>
<dbReference type="PaxDb" id="208964-PA3622"/>
<dbReference type="GeneID" id="880421"/>
<dbReference type="KEGG" id="pae:PA3622"/>
<dbReference type="PATRIC" id="fig|208964.12.peg.3791"/>
<dbReference type="PseudoCAP" id="PA3622"/>
<dbReference type="HOGENOM" id="CLU_014793_3_5_6"/>
<dbReference type="InParanoid" id="P45684"/>
<dbReference type="OrthoDB" id="9809557at2"/>
<dbReference type="PhylomeDB" id="P45684"/>
<dbReference type="BioCyc" id="PAER208964:G1FZ6-3692-MONOMER"/>
<dbReference type="PHI-base" id="PHI:10649"/>
<dbReference type="Proteomes" id="UP000002438">
    <property type="component" value="Chromosome"/>
</dbReference>
<dbReference type="GO" id="GO:0005737">
    <property type="term" value="C:cytoplasm"/>
    <property type="evidence" value="ECO:0007669"/>
    <property type="project" value="UniProtKB-SubCell"/>
</dbReference>
<dbReference type="GO" id="GO:0003677">
    <property type="term" value="F:DNA binding"/>
    <property type="evidence" value="ECO:0007669"/>
    <property type="project" value="UniProtKB-UniRule"/>
</dbReference>
<dbReference type="GO" id="GO:0016987">
    <property type="term" value="F:sigma factor activity"/>
    <property type="evidence" value="ECO:0007669"/>
    <property type="project" value="UniProtKB-UniRule"/>
</dbReference>
<dbReference type="GO" id="GO:0006352">
    <property type="term" value="P:DNA-templated transcription initiation"/>
    <property type="evidence" value="ECO:0007669"/>
    <property type="project" value="UniProtKB-UniRule"/>
</dbReference>
<dbReference type="GO" id="GO:1900377">
    <property type="term" value="P:negative regulation of secondary metabolite biosynthetic process"/>
    <property type="evidence" value="ECO:0000315"/>
    <property type="project" value="PseudoCAP"/>
</dbReference>
<dbReference type="GO" id="GO:0050921">
    <property type="term" value="P:positive regulation of chemotaxis"/>
    <property type="evidence" value="ECO:0000315"/>
    <property type="project" value="PseudoCAP"/>
</dbReference>
<dbReference type="GO" id="GO:1900233">
    <property type="term" value="P:positive regulation of single-species biofilm formation on inanimate substrate"/>
    <property type="evidence" value="ECO:0000315"/>
    <property type="project" value="PseudoCAP"/>
</dbReference>
<dbReference type="GO" id="GO:2000145">
    <property type="term" value="P:regulation of cell motility"/>
    <property type="evidence" value="ECO:0000315"/>
    <property type="project" value="PseudoCAP"/>
</dbReference>
<dbReference type="GO" id="GO:1900034">
    <property type="term" value="P:regulation of cellular response to heat"/>
    <property type="evidence" value="ECO:0000315"/>
    <property type="project" value="PseudoCAP"/>
</dbReference>
<dbReference type="GO" id="GO:1900407">
    <property type="term" value="P:regulation of cellular response to oxidative stress"/>
    <property type="evidence" value="ECO:0000315"/>
    <property type="project" value="PseudoCAP"/>
</dbReference>
<dbReference type="GO" id="GO:0006355">
    <property type="term" value="P:regulation of DNA-templated transcription"/>
    <property type="evidence" value="ECO:0000314"/>
    <property type="project" value="PseudoCAP"/>
</dbReference>
<dbReference type="GO" id="GO:1901000">
    <property type="term" value="P:regulation of response to salt stress"/>
    <property type="evidence" value="ECO:0000315"/>
    <property type="project" value="PseudoCAP"/>
</dbReference>
<dbReference type="CDD" id="cd06171">
    <property type="entry name" value="Sigma70_r4"/>
    <property type="match status" value="1"/>
</dbReference>
<dbReference type="FunFam" id="1.10.10.10:FF:000044">
    <property type="entry name" value="RNA polymerase sigma factor RpoS"/>
    <property type="match status" value="1"/>
</dbReference>
<dbReference type="FunFam" id="1.10.10.10:FF:000046">
    <property type="entry name" value="RNA polymerase sigma factor RpoS"/>
    <property type="match status" value="1"/>
</dbReference>
<dbReference type="FunFam" id="1.10.601.10:FF:000001">
    <property type="entry name" value="RNA polymerase sigma factor SigA"/>
    <property type="match status" value="1"/>
</dbReference>
<dbReference type="Gene3D" id="1.10.601.10">
    <property type="entry name" value="RNA Polymerase Primary Sigma Factor"/>
    <property type="match status" value="1"/>
</dbReference>
<dbReference type="Gene3D" id="1.10.10.10">
    <property type="entry name" value="Winged helix-like DNA-binding domain superfamily/Winged helix DNA-binding domain"/>
    <property type="match status" value="2"/>
</dbReference>
<dbReference type="HAMAP" id="MF_00959">
    <property type="entry name" value="Sigma70_RpoS"/>
    <property type="match status" value="1"/>
</dbReference>
<dbReference type="InterPro" id="IPR014284">
    <property type="entry name" value="RNA_pol_sigma-70_dom"/>
</dbReference>
<dbReference type="InterPro" id="IPR000943">
    <property type="entry name" value="RNA_pol_sigma70"/>
</dbReference>
<dbReference type="InterPro" id="IPR009042">
    <property type="entry name" value="RNA_pol_sigma70_r1_2"/>
</dbReference>
<dbReference type="InterPro" id="IPR007627">
    <property type="entry name" value="RNA_pol_sigma70_r2"/>
</dbReference>
<dbReference type="InterPro" id="IPR007624">
    <property type="entry name" value="RNA_pol_sigma70_r3"/>
</dbReference>
<dbReference type="InterPro" id="IPR007630">
    <property type="entry name" value="RNA_pol_sigma70_r4"/>
</dbReference>
<dbReference type="InterPro" id="IPR013325">
    <property type="entry name" value="RNA_pol_sigma_r2"/>
</dbReference>
<dbReference type="InterPro" id="IPR013324">
    <property type="entry name" value="RNA_pol_sigma_r3/r4-like"/>
</dbReference>
<dbReference type="InterPro" id="IPR012761">
    <property type="entry name" value="RNA_pol_sigma_RpoS"/>
</dbReference>
<dbReference type="InterPro" id="IPR050239">
    <property type="entry name" value="Sigma-70_RNA_pol_init_factors"/>
</dbReference>
<dbReference type="InterPro" id="IPR036388">
    <property type="entry name" value="WH-like_DNA-bd_sf"/>
</dbReference>
<dbReference type="NCBIfam" id="NF004207">
    <property type="entry name" value="PRK05657.1"/>
    <property type="match status" value="1"/>
</dbReference>
<dbReference type="NCBIfam" id="TIGR02394">
    <property type="entry name" value="rpoS_proteo"/>
    <property type="match status" value="1"/>
</dbReference>
<dbReference type="NCBIfam" id="TIGR02937">
    <property type="entry name" value="sigma70-ECF"/>
    <property type="match status" value="1"/>
</dbReference>
<dbReference type="PANTHER" id="PTHR30603">
    <property type="entry name" value="RNA POLYMERASE SIGMA FACTOR RPO"/>
    <property type="match status" value="1"/>
</dbReference>
<dbReference type="PANTHER" id="PTHR30603:SF67">
    <property type="entry name" value="RNA POLYMERASE SIGMA FACTOR RPOS"/>
    <property type="match status" value="1"/>
</dbReference>
<dbReference type="Pfam" id="PF00140">
    <property type="entry name" value="Sigma70_r1_2"/>
    <property type="match status" value="1"/>
</dbReference>
<dbReference type="Pfam" id="PF04542">
    <property type="entry name" value="Sigma70_r2"/>
    <property type="match status" value="1"/>
</dbReference>
<dbReference type="Pfam" id="PF04539">
    <property type="entry name" value="Sigma70_r3"/>
    <property type="match status" value="1"/>
</dbReference>
<dbReference type="Pfam" id="PF04545">
    <property type="entry name" value="Sigma70_r4"/>
    <property type="match status" value="1"/>
</dbReference>
<dbReference type="PRINTS" id="PR00046">
    <property type="entry name" value="SIGMA70FCT"/>
</dbReference>
<dbReference type="SUPFAM" id="SSF88946">
    <property type="entry name" value="Sigma2 domain of RNA polymerase sigma factors"/>
    <property type="match status" value="1"/>
</dbReference>
<dbReference type="SUPFAM" id="SSF88659">
    <property type="entry name" value="Sigma3 and sigma4 domains of RNA polymerase sigma factors"/>
    <property type="match status" value="2"/>
</dbReference>
<dbReference type="PROSITE" id="PS00715">
    <property type="entry name" value="SIGMA70_1"/>
    <property type="match status" value="1"/>
</dbReference>
<dbReference type="PROSITE" id="PS00716">
    <property type="entry name" value="SIGMA70_2"/>
    <property type="match status" value="1"/>
</dbReference>
<organism>
    <name type="scientific">Pseudomonas aeruginosa (strain ATCC 15692 / DSM 22644 / CIP 104116 / JCM 14847 / LMG 12228 / 1C / PRS 101 / PAO1)</name>
    <dbReference type="NCBI Taxonomy" id="208964"/>
    <lineage>
        <taxon>Bacteria</taxon>
        <taxon>Pseudomonadati</taxon>
        <taxon>Pseudomonadota</taxon>
        <taxon>Gammaproteobacteria</taxon>
        <taxon>Pseudomonadales</taxon>
        <taxon>Pseudomonadaceae</taxon>
        <taxon>Pseudomonas</taxon>
    </lineage>
</organism>
<sequence length="334" mass="38235">MALKKEGPEFDHDDEVLLLEPGIMLDESSADEQPSPRATPKATTSFSSKQHKHIDYTRALDATQLYLNEIGFSPLLTPEEEVHFARLAQKGDPAGRKRMIESNLRLVVKIARRYVNRGLSLLDLIEEGNLGLIRAVEKFDPERGFRFSTYATWWIRQTIERAIMNQTRTIRLPIHVVKELNVYLRAARELTHKLDHEPSPEEIANLLEKPVAEVKRMLGLNERVTSVDVSLGPDSDKTLLDTLTDDRPTDPCELLQDDDLSESIDQWLTELTDKQREVVIRRFGLRGHESSTLEEVGQEIGLTRERVRQIQVEALKRLREILEKNGLSSDALFQ</sequence>
<proteinExistence type="evidence at protein level"/>